<reference key="1">
    <citation type="journal article" date="2005" name="Genome Res.">
        <title>Comparative and functional genomic analyses of the pathogenicity of phytopathogen Xanthomonas campestris pv. campestris.</title>
        <authorList>
            <person name="Qian W."/>
            <person name="Jia Y."/>
            <person name="Ren S.-X."/>
            <person name="He Y.-Q."/>
            <person name="Feng J.-X."/>
            <person name="Lu L.-F."/>
            <person name="Sun Q."/>
            <person name="Ying G."/>
            <person name="Tang D.-J."/>
            <person name="Tang H."/>
            <person name="Wu W."/>
            <person name="Hao P."/>
            <person name="Wang L."/>
            <person name="Jiang B.-L."/>
            <person name="Zeng S."/>
            <person name="Gu W.-Y."/>
            <person name="Lu G."/>
            <person name="Rong L."/>
            <person name="Tian Y."/>
            <person name="Yao Z."/>
            <person name="Fu G."/>
            <person name="Chen B."/>
            <person name="Fang R."/>
            <person name="Qiang B."/>
            <person name="Chen Z."/>
            <person name="Zhao G.-P."/>
            <person name="Tang J.-L."/>
            <person name="He C."/>
        </authorList>
    </citation>
    <scope>NUCLEOTIDE SEQUENCE [LARGE SCALE GENOMIC DNA]</scope>
    <source>
        <strain>8004</strain>
    </source>
</reference>
<feature type="chain" id="PRO_0000302554" description="ATP-dependent dethiobiotin synthetase BioD">
    <location>
        <begin position="1"/>
        <end position="224"/>
    </location>
</feature>
<feature type="active site" evidence="1">
    <location>
        <position position="39"/>
    </location>
</feature>
<feature type="binding site" evidence="1">
    <location>
        <begin position="14"/>
        <end position="19"/>
    </location>
    <ligand>
        <name>ATP</name>
        <dbReference type="ChEBI" id="CHEBI:30616"/>
    </ligand>
</feature>
<feature type="binding site" evidence="1">
    <location>
        <position position="18"/>
    </location>
    <ligand>
        <name>Mg(2+)</name>
        <dbReference type="ChEBI" id="CHEBI:18420"/>
    </ligand>
</feature>
<feature type="binding site" evidence="1">
    <location>
        <position position="43"/>
    </location>
    <ligand>
        <name>substrate</name>
    </ligand>
</feature>
<feature type="binding site" evidence="1">
    <location>
        <position position="56"/>
    </location>
    <ligand>
        <name>ATP</name>
        <dbReference type="ChEBI" id="CHEBI:30616"/>
    </ligand>
</feature>
<feature type="binding site" evidence="1">
    <location>
        <position position="56"/>
    </location>
    <ligand>
        <name>Mg(2+)</name>
        <dbReference type="ChEBI" id="CHEBI:18420"/>
    </ligand>
</feature>
<feature type="binding site" evidence="1">
    <location>
        <begin position="117"/>
        <end position="120"/>
    </location>
    <ligand>
        <name>ATP</name>
        <dbReference type="ChEBI" id="CHEBI:30616"/>
    </ligand>
</feature>
<feature type="binding site" evidence="1">
    <location>
        <position position="117"/>
    </location>
    <ligand>
        <name>Mg(2+)</name>
        <dbReference type="ChEBI" id="CHEBI:18420"/>
    </ligand>
</feature>
<feature type="binding site" evidence="1">
    <location>
        <begin position="177"/>
        <end position="178"/>
    </location>
    <ligand>
        <name>ATP</name>
        <dbReference type="ChEBI" id="CHEBI:30616"/>
    </ligand>
</feature>
<dbReference type="EC" id="6.3.3.3" evidence="1"/>
<dbReference type="EMBL" id="CP000050">
    <property type="protein sequence ID" value="AAY50687.1"/>
    <property type="molecule type" value="Genomic_DNA"/>
</dbReference>
<dbReference type="RefSeq" id="WP_011270016.1">
    <property type="nucleotide sequence ID" value="NZ_CP155948.1"/>
</dbReference>
<dbReference type="SMR" id="Q4UQI6"/>
<dbReference type="KEGG" id="xcb:XC_3646"/>
<dbReference type="HOGENOM" id="CLU_072551_0_0_6"/>
<dbReference type="UniPathway" id="UPA00078">
    <property type="reaction ID" value="UER00161"/>
</dbReference>
<dbReference type="Proteomes" id="UP000000420">
    <property type="component" value="Chromosome"/>
</dbReference>
<dbReference type="GO" id="GO:0005829">
    <property type="term" value="C:cytosol"/>
    <property type="evidence" value="ECO:0007669"/>
    <property type="project" value="TreeGrafter"/>
</dbReference>
<dbReference type="GO" id="GO:0005524">
    <property type="term" value="F:ATP binding"/>
    <property type="evidence" value="ECO:0007669"/>
    <property type="project" value="UniProtKB-UniRule"/>
</dbReference>
<dbReference type="GO" id="GO:0004141">
    <property type="term" value="F:dethiobiotin synthase activity"/>
    <property type="evidence" value="ECO:0007669"/>
    <property type="project" value="UniProtKB-UniRule"/>
</dbReference>
<dbReference type="GO" id="GO:0000287">
    <property type="term" value="F:magnesium ion binding"/>
    <property type="evidence" value="ECO:0007669"/>
    <property type="project" value="UniProtKB-UniRule"/>
</dbReference>
<dbReference type="GO" id="GO:0009102">
    <property type="term" value="P:biotin biosynthetic process"/>
    <property type="evidence" value="ECO:0007669"/>
    <property type="project" value="UniProtKB-UniRule"/>
</dbReference>
<dbReference type="CDD" id="cd03109">
    <property type="entry name" value="DTBS"/>
    <property type="match status" value="1"/>
</dbReference>
<dbReference type="FunFam" id="3.40.50.300:FF:000292">
    <property type="entry name" value="ATP-dependent dethiobiotin synthetase BioD"/>
    <property type="match status" value="1"/>
</dbReference>
<dbReference type="Gene3D" id="3.40.50.300">
    <property type="entry name" value="P-loop containing nucleotide triphosphate hydrolases"/>
    <property type="match status" value="1"/>
</dbReference>
<dbReference type="HAMAP" id="MF_00336">
    <property type="entry name" value="BioD"/>
    <property type="match status" value="1"/>
</dbReference>
<dbReference type="InterPro" id="IPR004472">
    <property type="entry name" value="DTB_synth_BioD"/>
</dbReference>
<dbReference type="InterPro" id="IPR027417">
    <property type="entry name" value="P-loop_NTPase"/>
</dbReference>
<dbReference type="NCBIfam" id="TIGR00347">
    <property type="entry name" value="bioD"/>
    <property type="match status" value="1"/>
</dbReference>
<dbReference type="PANTHER" id="PTHR43210">
    <property type="entry name" value="DETHIOBIOTIN SYNTHETASE"/>
    <property type="match status" value="1"/>
</dbReference>
<dbReference type="PANTHER" id="PTHR43210:SF5">
    <property type="entry name" value="DETHIOBIOTIN SYNTHETASE"/>
    <property type="match status" value="1"/>
</dbReference>
<dbReference type="Pfam" id="PF13500">
    <property type="entry name" value="AAA_26"/>
    <property type="match status" value="1"/>
</dbReference>
<dbReference type="PIRSF" id="PIRSF006755">
    <property type="entry name" value="DTB_synth"/>
    <property type="match status" value="1"/>
</dbReference>
<dbReference type="SUPFAM" id="SSF52540">
    <property type="entry name" value="P-loop containing nucleoside triphosphate hydrolases"/>
    <property type="match status" value="1"/>
</dbReference>
<name>BIOD_XANC8</name>
<accession>Q4UQI6</accession>
<organism>
    <name type="scientific">Xanthomonas campestris pv. campestris (strain 8004)</name>
    <dbReference type="NCBI Taxonomy" id="314565"/>
    <lineage>
        <taxon>Bacteria</taxon>
        <taxon>Pseudomonadati</taxon>
        <taxon>Pseudomonadota</taxon>
        <taxon>Gammaproteobacteria</taxon>
        <taxon>Lysobacterales</taxon>
        <taxon>Lysobacteraceae</taxon>
        <taxon>Xanthomonas</taxon>
    </lineage>
</organism>
<proteinExistence type="inferred from homology"/>
<evidence type="ECO:0000255" key="1">
    <source>
        <dbReference type="HAMAP-Rule" id="MF_00336"/>
    </source>
</evidence>
<comment type="function">
    <text evidence="1">Catalyzes a mechanistically unusual reaction, the ATP-dependent insertion of CO2 between the N7 and N8 nitrogen atoms of 7,8-diaminopelargonic acid (DAPA, also called 7,8-diammoniononanoate) to form a ureido ring.</text>
</comment>
<comment type="catalytic activity">
    <reaction evidence="1">
        <text>(7R,8S)-7,8-diammoniononanoate + CO2 + ATP = (4R,5S)-dethiobiotin + ADP + phosphate + 3 H(+)</text>
        <dbReference type="Rhea" id="RHEA:15805"/>
        <dbReference type="ChEBI" id="CHEBI:15378"/>
        <dbReference type="ChEBI" id="CHEBI:16526"/>
        <dbReference type="ChEBI" id="CHEBI:30616"/>
        <dbReference type="ChEBI" id="CHEBI:43474"/>
        <dbReference type="ChEBI" id="CHEBI:149469"/>
        <dbReference type="ChEBI" id="CHEBI:149473"/>
        <dbReference type="ChEBI" id="CHEBI:456216"/>
        <dbReference type="EC" id="6.3.3.3"/>
    </reaction>
</comment>
<comment type="cofactor">
    <cofactor evidence="1">
        <name>Mg(2+)</name>
        <dbReference type="ChEBI" id="CHEBI:18420"/>
    </cofactor>
</comment>
<comment type="pathway">
    <text evidence="1">Cofactor biosynthesis; biotin biosynthesis; biotin from 7,8-diaminononanoate: step 1/2.</text>
</comment>
<comment type="subunit">
    <text evidence="1">Homodimer.</text>
</comment>
<comment type="subcellular location">
    <subcellularLocation>
        <location evidence="1">Cytoplasm</location>
    </subcellularLocation>
</comment>
<comment type="similarity">
    <text evidence="1">Belongs to the dethiobiotin synthetase family.</text>
</comment>
<keyword id="KW-0067">ATP-binding</keyword>
<keyword id="KW-0093">Biotin biosynthesis</keyword>
<keyword id="KW-0963">Cytoplasm</keyword>
<keyword id="KW-0436">Ligase</keyword>
<keyword id="KW-0460">Magnesium</keyword>
<keyword id="KW-0479">Metal-binding</keyword>
<keyword id="KW-0547">Nucleotide-binding</keyword>
<protein>
    <recommendedName>
        <fullName evidence="1">ATP-dependent dethiobiotin synthetase BioD</fullName>
        <ecNumber evidence="1">6.3.3.3</ecNumber>
    </recommendedName>
    <alternativeName>
        <fullName evidence="1">DTB synthetase</fullName>
        <shortName evidence="1">DTBS</shortName>
    </alternativeName>
    <alternativeName>
        <fullName evidence="1">Dethiobiotin synthase</fullName>
    </alternativeName>
</protein>
<gene>
    <name evidence="1" type="primary">bioD</name>
    <name type="ordered locus">XC_3646</name>
</gene>
<sequence length="224" mass="23633">MQFPAFYVTGTDTGIGKTVASTALLHAVRARGHTAVGMKPVASGCVATPQGWHNEDALALQAASQPQPDYATLNPYALPAALAPELAAADVGVTLSLVPLQQALAQLRAQAEVVVVEGVGGWAAPLSAQLDQADLVRALQLPVVLVVGVRLGCINHARLTAAAIAADGLRCIGWIANEIDPQMERIEDNIRMLGQRLAMPCWGRIPWRPNAQAEGLAQHIRLPE</sequence>